<name>OSMW_SALTY</name>
<dbReference type="EMBL" id="AE006468">
    <property type="protein sequence ID" value="AAL20411.1"/>
    <property type="molecule type" value="Genomic_DNA"/>
</dbReference>
<dbReference type="RefSeq" id="NP_460452.1">
    <property type="nucleotide sequence ID" value="NC_003197.2"/>
</dbReference>
<dbReference type="RefSeq" id="WP_000379677.1">
    <property type="nucleotide sequence ID" value="NC_003197.2"/>
</dbReference>
<dbReference type="SMR" id="Q8ZPK3"/>
<dbReference type="STRING" id="99287.STM1492"/>
<dbReference type="TCDB" id="3.A.1.12.14">
    <property type="family name" value="the atp-binding cassette (abc) superfamily"/>
</dbReference>
<dbReference type="PaxDb" id="99287-STM1492"/>
<dbReference type="GeneID" id="1253010"/>
<dbReference type="KEGG" id="stm:STM1492"/>
<dbReference type="PATRIC" id="fig|99287.12.peg.1577"/>
<dbReference type="HOGENOM" id="CLU_046113_7_2_6"/>
<dbReference type="OMA" id="MRYLFTH"/>
<dbReference type="PhylomeDB" id="Q8ZPK3"/>
<dbReference type="BioCyc" id="SENT99287:STM1492-MONOMER"/>
<dbReference type="Proteomes" id="UP000001014">
    <property type="component" value="Chromosome"/>
</dbReference>
<dbReference type="GO" id="GO:0005886">
    <property type="term" value="C:plasma membrane"/>
    <property type="evidence" value="ECO:0007669"/>
    <property type="project" value="UniProtKB-SubCell"/>
</dbReference>
<dbReference type="GO" id="GO:0031460">
    <property type="term" value="P:glycine betaine transport"/>
    <property type="evidence" value="ECO:0000318"/>
    <property type="project" value="GO_Central"/>
</dbReference>
<dbReference type="GO" id="GO:0055085">
    <property type="term" value="P:transmembrane transport"/>
    <property type="evidence" value="ECO:0007669"/>
    <property type="project" value="InterPro"/>
</dbReference>
<dbReference type="CDD" id="cd06261">
    <property type="entry name" value="TM_PBP2"/>
    <property type="match status" value="1"/>
</dbReference>
<dbReference type="FunFam" id="1.10.3720.10:FF:000001">
    <property type="entry name" value="Glycine betaine ABC transporter, permease"/>
    <property type="match status" value="1"/>
</dbReference>
<dbReference type="Gene3D" id="1.10.3720.10">
    <property type="entry name" value="MetI-like"/>
    <property type="match status" value="1"/>
</dbReference>
<dbReference type="InterPro" id="IPR051204">
    <property type="entry name" value="ABC_transp_perm/SBD"/>
</dbReference>
<dbReference type="InterPro" id="IPR000515">
    <property type="entry name" value="MetI-like"/>
</dbReference>
<dbReference type="InterPro" id="IPR035906">
    <property type="entry name" value="MetI-like_sf"/>
</dbReference>
<dbReference type="PANTHER" id="PTHR30177">
    <property type="entry name" value="GLYCINE BETAINE/L-PROLINE TRANSPORT SYSTEM PERMEASE PROTEIN PROW"/>
    <property type="match status" value="1"/>
</dbReference>
<dbReference type="PANTHER" id="PTHR30177:SF4">
    <property type="entry name" value="OSMOPROTECTANT IMPORT PERMEASE PROTEIN OSMW"/>
    <property type="match status" value="1"/>
</dbReference>
<dbReference type="Pfam" id="PF00528">
    <property type="entry name" value="BPD_transp_1"/>
    <property type="match status" value="1"/>
</dbReference>
<dbReference type="SUPFAM" id="SSF161098">
    <property type="entry name" value="MetI-like"/>
    <property type="match status" value="1"/>
</dbReference>
<dbReference type="PROSITE" id="PS50928">
    <property type="entry name" value="ABC_TM1"/>
    <property type="match status" value="1"/>
</dbReference>
<feature type="chain" id="PRO_0000430044" description="Osmoprotectant import permease protein OsmW">
    <location>
        <begin position="1"/>
        <end position="215"/>
    </location>
</feature>
<feature type="transmembrane region" description="Helical" evidence="2">
    <location>
        <begin position="24"/>
        <end position="44"/>
    </location>
</feature>
<feature type="transmembrane region" description="Helical" evidence="2">
    <location>
        <begin position="51"/>
        <end position="73"/>
    </location>
</feature>
<feature type="transmembrane region" description="Helical" evidence="2">
    <location>
        <begin position="78"/>
        <end position="100"/>
    </location>
</feature>
<feature type="transmembrane region" description="Helical" evidence="2">
    <location>
        <begin position="132"/>
        <end position="152"/>
    </location>
</feature>
<feature type="transmembrane region" description="Helical" evidence="2">
    <location>
        <begin position="153"/>
        <end position="173"/>
    </location>
</feature>
<feature type="transmembrane region" description="Helical" evidence="2">
    <location>
        <begin position="183"/>
        <end position="203"/>
    </location>
</feature>
<feature type="domain" description="ABC transmembrane type-1" evidence="2">
    <location>
        <begin position="18"/>
        <end position="202"/>
    </location>
</feature>
<sequence length="215" mass="22883">MDTIHYMLDNAGYLASLTFQHLWLVALAVGLAIIIGVPLGVLIVRHKWLATPVLGAATLLLTIPSIALFGLMIPLFSLIGHGIGVLPAVTAVFLYSLLPIVRNTHTALDSLPPGLREAGRGIGMTFWQRLRWVEIPMALPVIFGGIRTAVVMNIGVMAIAAVIGAGGLGLLLLNGISGSDIRMLIAGALMICLLAIVLDWLLHRLQVVLTPKGIR</sequence>
<accession>Q8ZPK3</accession>
<organism>
    <name type="scientific">Salmonella typhimurium (strain LT2 / SGSC1412 / ATCC 700720)</name>
    <dbReference type="NCBI Taxonomy" id="99287"/>
    <lineage>
        <taxon>Bacteria</taxon>
        <taxon>Pseudomonadati</taxon>
        <taxon>Pseudomonadota</taxon>
        <taxon>Gammaproteobacteria</taxon>
        <taxon>Enterobacterales</taxon>
        <taxon>Enterobacteriaceae</taxon>
        <taxon>Salmonella</taxon>
    </lineage>
</organism>
<protein>
    <recommendedName>
        <fullName>Osmoprotectant import permease protein OsmW</fullName>
    </recommendedName>
</protein>
<gene>
    <name type="primary">osmW</name>
    <name type="ordered locus">STM1492</name>
</gene>
<proteinExistence type="evidence at protein level"/>
<comment type="function">
    <text evidence="3">Part of the OsmU ABC transporter complex, which is involved in the uptake of osmoprotectants such as choline-O-sulfate and glycine betaine. Probably responsible for the translocation of the substrate across the membrane.</text>
</comment>
<comment type="subunit">
    <text evidence="5">The complex is composed of two ATP-binding proteins (OsmV), two transmembrane proteins (OsmW and OsmY) and a solute-binding protein (OsmX).</text>
</comment>
<comment type="subcellular location">
    <subcellularLocation>
        <location evidence="1">Cell inner membrane</location>
        <topology evidence="2">Multi-pass membrane protein</topology>
    </subcellularLocation>
</comment>
<comment type="induction">
    <text evidence="3">Induced by osmotic stress. Part of the osmU operon, which consists of four genes (osmV, osmW, osmX and osmY).</text>
</comment>
<comment type="disruption phenotype">
    <text evidence="3">Deletion of the osmU operon eliminates the residual osmoprotection by glycine betaine in a mutant that is lacking the ProP and the ProU systems. OsmU deletion has no effect on the utilization of glycine betaine as an osmoprotectant when ProP or ProU are functional.</text>
</comment>
<comment type="similarity">
    <text evidence="4">Belongs to the binding-protein-dependent transport system permease family.</text>
</comment>
<evidence type="ECO:0000250" key="1"/>
<evidence type="ECO:0000255" key="2">
    <source>
        <dbReference type="PROSITE-ProRule" id="PRU00441"/>
    </source>
</evidence>
<evidence type="ECO:0000269" key="3">
    <source>
    </source>
</evidence>
<evidence type="ECO:0000305" key="4"/>
<evidence type="ECO:0000305" key="5">
    <source>
    </source>
</evidence>
<keyword id="KW-0997">Cell inner membrane</keyword>
<keyword id="KW-1003">Cell membrane</keyword>
<keyword id="KW-0472">Membrane</keyword>
<keyword id="KW-1185">Reference proteome</keyword>
<keyword id="KW-0812">Transmembrane</keyword>
<keyword id="KW-1133">Transmembrane helix</keyword>
<keyword id="KW-0813">Transport</keyword>
<reference key="1">
    <citation type="journal article" date="2001" name="Nature">
        <title>Complete genome sequence of Salmonella enterica serovar Typhimurium LT2.</title>
        <authorList>
            <person name="McClelland M."/>
            <person name="Sanderson K.E."/>
            <person name="Spieth J."/>
            <person name="Clifton S.W."/>
            <person name="Latreille P."/>
            <person name="Courtney L."/>
            <person name="Porwollik S."/>
            <person name="Ali J."/>
            <person name="Dante M."/>
            <person name="Du F."/>
            <person name="Hou S."/>
            <person name="Layman D."/>
            <person name="Leonard S."/>
            <person name="Nguyen C."/>
            <person name="Scott K."/>
            <person name="Holmes A."/>
            <person name="Grewal N."/>
            <person name="Mulvaney E."/>
            <person name="Ryan E."/>
            <person name="Sun H."/>
            <person name="Florea L."/>
            <person name="Miller W."/>
            <person name="Stoneking T."/>
            <person name="Nhan M."/>
            <person name="Waterston R."/>
            <person name="Wilson R.K."/>
        </authorList>
    </citation>
    <scope>NUCLEOTIDE SEQUENCE [LARGE SCALE GENOMIC DNA]</scope>
    <source>
        <strain>LT2 / SGSC1412 / ATCC 700720</strain>
    </source>
</reference>
<reference key="2">
    <citation type="journal article" date="2012" name="J. Bacteriol.">
        <title>Identification of a third osmoprotectant transport system, the osmU system, in Salmonella enterica.</title>
        <authorList>
            <person name="Frossard S.M."/>
            <person name="Khan A.A."/>
            <person name="Warrick E.C."/>
            <person name="Gately J.M."/>
            <person name="Hanson A.D."/>
            <person name="Oldham M.L."/>
            <person name="Sanders D.A."/>
            <person name="Csonka L.N."/>
        </authorList>
    </citation>
    <scope>FUNCTION</scope>
    <scope>SUBUNIT</scope>
    <scope>INDUCTION</scope>
    <scope>DISRUPTION PHENOTYPE</scope>
    <scope>GENE NAME</scope>
    <source>
        <strain>LT2</strain>
    </source>
</reference>